<feature type="chain" id="PRO_1000115077" description="Small ribosomal subunit protein uS2">
    <location>
        <begin position="1"/>
        <end position="266"/>
    </location>
</feature>
<feature type="region of interest" description="Disordered" evidence="2">
    <location>
        <begin position="233"/>
        <end position="266"/>
    </location>
</feature>
<feature type="compositionally biased region" description="Basic residues" evidence="2">
    <location>
        <begin position="248"/>
        <end position="258"/>
    </location>
</feature>
<protein>
    <recommendedName>
        <fullName evidence="1">Small ribosomal subunit protein uS2</fullName>
    </recommendedName>
    <alternativeName>
        <fullName evidence="3">30S ribosomal protein S2</fullName>
    </alternativeName>
</protein>
<sequence length="266" mass="29201">MPQVTMRQMLEAGVHFGHQTRYRHPKMSPNIFGARGKIHIINLEKTVPLFNDAMNFLSAVAQKRGSVLFVGTKRSARDAIKEEAERCGMPYMIQRWLGGTLTNFRTVKQSVARLKELELAETDGTFSKLVKHEVLRLRRESGKLQASLGGIKDMNRIPDAIFVIDIGHEDIAIKEAKKLGIPVVAVVDTNYDPSLVDYPIPGNDDAIRAVQLYARAAADAVLEGKAAMPNAAAVREEEFASAPDAGKKGRQAQPKKGKRASDAAAE</sequence>
<accession>B2I9U3</accession>
<dbReference type="EMBL" id="CP001011">
    <property type="protein sequence ID" value="ACB93464.1"/>
    <property type="molecule type" value="Genomic_DNA"/>
</dbReference>
<dbReference type="RefSeq" id="WP_004090321.1">
    <property type="nucleotide sequence ID" value="NC_010577.1"/>
</dbReference>
<dbReference type="SMR" id="B2I9U3"/>
<dbReference type="GeneID" id="93905822"/>
<dbReference type="KEGG" id="xfn:XfasM23_2066"/>
<dbReference type="HOGENOM" id="CLU_040318_1_2_6"/>
<dbReference type="Proteomes" id="UP000001698">
    <property type="component" value="Chromosome"/>
</dbReference>
<dbReference type="GO" id="GO:0022627">
    <property type="term" value="C:cytosolic small ribosomal subunit"/>
    <property type="evidence" value="ECO:0007669"/>
    <property type="project" value="TreeGrafter"/>
</dbReference>
<dbReference type="GO" id="GO:0003735">
    <property type="term" value="F:structural constituent of ribosome"/>
    <property type="evidence" value="ECO:0007669"/>
    <property type="project" value="InterPro"/>
</dbReference>
<dbReference type="GO" id="GO:0006412">
    <property type="term" value="P:translation"/>
    <property type="evidence" value="ECO:0007669"/>
    <property type="project" value="UniProtKB-UniRule"/>
</dbReference>
<dbReference type="CDD" id="cd01425">
    <property type="entry name" value="RPS2"/>
    <property type="match status" value="1"/>
</dbReference>
<dbReference type="FunFam" id="1.10.287.610:FF:000001">
    <property type="entry name" value="30S ribosomal protein S2"/>
    <property type="match status" value="1"/>
</dbReference>
<dbReference type="Gene3D" id="3.40.50.10490">
    <property type="entry name" value="Glucose-6-phosphate isomerase like protein, domain 1"/>
    <property type="match status" value="1"/>
</dbReference>
<dbReference type="Gene3D" id="1.10.287.610">
    <property type="entry name" value="Helix hairpin bin"/>
    <property type="match status" value="1"/>
</dbReference>
<dbReference type="HAMAP" id="MF_00291_B">
    <property type="entry name" value="Ribosomal_uS2_B"/>
    <property type="match status" value="1"/>
</dbReference>
<dbReference type="InterPro" id="IPR001865">
    <property type="entry name" value="Ribosomal_uS2"/>
</dbReference>
<dbReference type="InterPro" id="IPR005706">
    <property type="entry name" value="Ribosomal_uS2_bac/mit/plastid"/>
</dbReference>
<dbReference type="InterPro" id="IPR018130">
    <property type="entry name" value="Ribosomal_uS2_CS"/>
</dbReference>
<dbReference type="InterPro" id="IPR023591">
    <property type="entry name" value="Ribosomal_uS2_flav_dom_sf"/>
</dbReference>
<dbReference type="NCBIfam" id="TIGR01011">
    <property type="entry name" value="rpsB_bact"/>
    <property type="match status" value="1"/>
</dbReference>
<dbReference type="PANTHER" id="PTHR12534">
    <property type="entry name" value="30S RIBOSOMAL PROTEIN S2 PROKARYOTIC AND ORGANELLAR"/>
    <property type="match status" value="1"/>
</dbReference>
<dbReference type="PANTHER" id="PTHR12534:SF0">
    <property type="entry name" value="SMALL RIBOSOMAL SUBUNIT PROTEIN US2M"/>
    <property type="match status" value="1"/>
</dbReference>
<dbReference type="Pfam" id="PF00318">
    <property type="entry name" value="Ribosomal_S2"/>
    <property type="match status" value="1"/>
</dbReference>
<dbReference type="PRINTS" id="PR00395">
    <property type="entry name" value="RIBOSOMALS2"/>
</dbReference>
<dbReference type="SUPFAM" id="SSF52313">
    <property type="entry name" value="Ribosomal protein S2"/>
    <property type="match status" value="1"/>
</dbReference>
<dbReference type="PROSITE" id="PS00962">
    <property type="entry name" value="RIBOSOMAL_S2_1"/>
    <property type="match status" value="1"/>
</dbReference>
<dbReference type="PROSITE" id="PS00963">
    <property type="entry name" value="RIBOSOMAL_S2_2"/>
    <property type="match status" value="1"/>
</dbReference>
<evidence type="ECO:0000255" key="1">
    <source>
        <dbReference type="HAMAP-Rule" id="MF_00291"/>
    </source>
</evidence>
<evidence type="ECO:0000256" key="2">
    <source>
        <dbReference type="SAM" id="MobiDB-lite"/>
    </source>
</evidence>
<evidence type="ECO:0000305" key="3"/>
<comment type="similarity">
    <text evidence="1">Belongs to the universal ribosomal protein uS2 family.</text>
</comment>
<keyword id="KW-0687">Ribonucleoprotein</keyword>
<keyword id="KW-0689">Ribosomal protein</keyword>
<proteinExistence type="inferred from homology"/>
<gene>
    <name evidence="1" type="primary">rpsB</name>
    <name type="ordered locus">XfasM23_2066</name>
</gene>
<name>RS2_XYLF2</name>
<reference key="1">
    <citation type="journal article" date="2010" name="J. Bacteriol.">
        <title>Whole genome sequences of two Xylella fastidiosa strains (M12 and M23) causing almond leaf scorch disease in California.</title>
        <authorList>
            <person name="Chen J."/>
            <person name="Xie G."/>
            <person name="Han S."/>
            <person name="Chertkov O."/>
            <person name="Sims D."/>
            <person name="Civerolo E.L."/>
        </authorList>
    </citation>
    <scope>NUCLEOTIDE SEQUENCE [LARGE SCALE GENOMIC DNA]</scope>
    <source>
        <strain>M23</strain>
    </source>
</reference>
<organism>
    <name type="scientific">Xylella fastidiosa (strain M23)</name>
    <dbReference type="NCBI Taxonomy" id="405441"/>
    <lineage>
        <taxon>Bacteria</taxon>
        <taxon>Pseudomonadati</taxon>
        <taxon>Pseudomonadota</taxon>
        <taxon>Gammaproteobacteria</taxon>
        <taxon>Lysobacterales</taxon>
        <taxon>Lysobacteraceae</taxon>
        <taxon>Xylella</taxon>
    </lineage>
</organism>